<organism>
    <name type="scientific">Pseudomonas syringae pv. tomato (strain ATCC BAA-871 / DC3000)</name>
    <dbReference type="NCBI Taxonomy" id="223283"/>
    <lineage>
        <taxon>Bacteria</taxon>
        <taxon>Pseudomonadati</taxon>
        <taxon>Pseudomonadota</taxon>
        <taxon>Gammaproteobacteria</taxon>
        <taxon>Pseudomonadales</taxon>
        <taxon>Pseudomonadaceae</taxon>
        <taxon>Pseudomonas</taxon>
    </lineage>
</organism>
<keyword id="KW-0963">Cytoplasm</keyword>
<keyword id="KW-0664">Pyridoxine biosynthesis</keyword>
<keyword id="KW-1185">Reference proteome</keyword>
<keyword id="KW-0808">Transferase</keyword>
<sequence>MTQSTRILLGVNIDHVATLRQARGTRYPDPVKAALDAEEAGADGITVHLREDRRHIQERDVLLLKDVLQTRMNFEMGVTEEMLAFAERIRPAHICLVPETRQELTTEGGLDVAGQEARIKAAVERLAKIGCEVSLFIDADERQIAASKRVGAPAVELHTGRYADAQTPTEVAEELQRVADGVAFGLAQGLIVNAGHGLHYHNVEAVAAIKGINELNIGHALVAHALFVGFKAAVAEMKALIVAAAR</sequence>
<comment type="function">
    <text evidence="1">Catalyzes the complicated ring closure reaction between the two acyclic compounds 1-deoxy-D-xylulose-5-phosphate (DXP) and 3-amino-2-oxopropyl phosphate (1-amino-acetone-3-phosphate or AAP) to form pyridoxine 5'-phosphate (PNP) and inorganic phosphate.</text>
</comment>
<comment type="catalytic activity">
    <reaction evidence="1">
        <text>3-amino-2-oxopropyl phosphate + 1-deoxy-D-xylulose 5-phosphate = pyridoxine 5'-phosphate + phosphate + 2 H2O + H(+)</text>
        <dbReference type="Rhea" id="RHEA:15265"/>
        <dbReference type="ChEBI" id="CHEBI:15377"/>
        <dbReference type="ChEBI" id="CHEBI:15378"/>
        <dbReference type="ChEBI" id="CHEBI:43474"/>
        <dbReference type="ChEBI" id="CHEBI:57279"/>
        <dbReference type="ChEBI" id="CHEBI:57792"/>
        <dbReference type="ChEBI" id="CHEBI:58589"/>
        <dbReference type="EC" id="2.6.99.2"/>
    </reaction>
</comment>
<comment type="pathway">
    <text evidence="1">Cofactor biosynthesis; pyridoxine 5'-phosphate biosynthesis; pyridoxine 5'-phosphate from D-erythrose 4-phosphate: step 5/5.</text>
</comment>
<comment type="subunit">
    <text evidence="1">Homooctamer; tetramer of dimers.</text>
</comment>
<comment type="subcellular location">
    <subcellularLocation>
        <location evidence="1">Cytoplasm</location>
    </subcellularLocation>
</comment>
<comment type="similarity">
    <text evidence="1">Belongs to the PNP synthase family.</text>
</comment>
<reference key="1">
    <citation type="journal article" date="2003" name="Proc. Natl. Acad. Sci. U.S.A.">
        <title>The complete genome sequence of the Arabidopsis and tomato pathogen Pseudomonas syringae pv. tomato DC3000.</title>
        <authorList>
            <person name="Buell C.R."/>
            <person name="Joardar V."/>
            <person name="Lindeberg M."/>
            <person name="Selengut J."/>
            <person name="Paulsen I.T."/>
            <person name="Gwinn M.L."/>
            <person name="Dodson R.J."/>
            <person name="DeBoy R.T."/>
            <person name="Durkin A.S."/>
            <person name="Kolonay J.F."/>
            <person name="Madupu R."/>
            <person name="Daugherty S.C."/>
            <person name="Brinkac L.M."/>
            <person name="Beanan M.J."/>
            <person name="Haft D.H."/>
            <person name="Nelson W.C."/>
            <person name="Davidsen T.M."/>
            <person name="Zafar N."/>
            <person name="Zhou L."/>
            <person name="Liu J."/>
            <person name="Yuan Q."/>
            <person name="Khouri H.M."/>
            <person name="Fedorova N.B."/>
            <person name="Tran B."/>
            <person name="Russell D."/>
            <person name="Berry K.J."/>
            <person name="Utterback T.R."/>
            <person name="Van Aken S.E."/>
            <person name="Feldblyum T.V."/>
            <person name="D'Ascenzo M."/>
            <person name="Deng W.-L."/>
            <person name="Ramos A.R."/>
            <person name="Alfano J.R."/>
            <person name="Cartinhour S."/>
            <person name="Chatterjee A.K."/>
            <person name="Delaney T.P."/>
            <person name="Lazarowitz S.G."/>
            <person name="Martin G.B."/>
            <person name="Schneider D.J."/>
            <person name="Tang X."/>
            <person name="Bender C.L."/>
            <person name="White O."/>
            <person name="Fraser C.M."/>
            <person name="Collmer A."/>
        </authorList>
    </citation>
    <scope>NUCLEOTIDE SEQUENCE [LARGE SCALE GENOMIC DNA]</scope>
    <source>
        <strain>ATCC BAA-871 / DC3000</strain>
    </source>
</reference>
<dbReference type="EC" id="2.6.99.2" evidence="1"/>
<dbReference type="EMBL" id="AE016853">
    <property type="protein sequence ID" value="AAO57670.1"/>
    <property type="molecule type" value="Genomic_DNA"/>
</dbReference>
<dbReference type="RefSeq" id="NP_793975.1">
    <property type="nucleotide sequence ID" value="NC_004578.1"/>
</dbReference>
<dbReference type="RefSeq" id="WP_005764769.1">
    <property type="nucleotide sequence ID" value="NC_004578.1"/>
</dbReference>
<dbReference type="SMR" id="Q87XG4"/>
<dbReference type="STRING" id="223283.PSPTO_4214"/>
<dbReference type="GeneID" id="1185894"/>
<dbReference type="KEGG" id="pst:PSPTO_4214"/>
<dbReference type="PATRIC" id="fig|223283.9.peg.4321"/>
<dbReference type="eggNOG" id="COG0854">
    <property type="taxonomic scope" value="Bacteria"/>
</dbReference>
<dbReference type="HOGENOM" id="CLU_074563_0_0_6"/>
<dbReference type="OrthoDB" id="9806590at2"/>
<dbReference type="PhylomeDB" id="Q87XG4"/>
<dbReference type="UniPathway" id="UPA00244">
    <property type="reaction ID" value="UER00313"/>
</dbReference>
<dbReference type="Proteomes" id="UP000002515">
    <property type="component" value="Chromosome"/>
</dbReference>
<dbReference type="GO" id="GO:0005829">
    <property type="term" value="C:cytosol"/>
    <property type="evidence" value="ECO:0007669"/>
    <property type="project" value="TreeGrafter"/>
</dbReference>
<dbReference type="GO" id="GO:0033856">
    <property type="term" value="F:pyridoxine 5'-phosphate synthase activity"/>
    <property type="evidence" value="ECO:0007669"/>
    <property type="project" value="UniProtKB-EC"/>
</dbReference>
<dbReference type="GO" id="GO:0008615">
    <property type="term" value="P:pyridoxine biosynthetic process"/>
    <property type="evidence" value="ECO:0007669"/>
    <property type="project" value="UniProtKB-UniRule"/>
</dbReference>
<dbReference type="CDD" id="cd00003">
    <property type="entry name" value="PNPsynthase"/>
    <property type="match status" value="1"/>
</dbReference>
<dbReference type="FunFam" id="3.20.20.70:FF:000042">
    <property type="entry name" value="Pyridoxine 5'-phosphate synthase"/>
    <property type="match status" value="1"/>
</dbReference>
<dbReference type="Gene3D" id="3.20.20.70">
    <property type="entry name" value="Aldolase class I"/>
    <property type="match status" value="1"/>
</dbReference>
<dbReference type="HAMAP" id="MF_00279">
    <property type="entry name" value="PdxJ"/>
    <property type="match status" value="1"/>
</dbReference>
<dbReference type="InterPro" id="IPR013785">
    <property type="entry name" value="Aldolase_TIM"/>
</dbReference>
<dbReference type="InterPro" id="IPR004569">
    <property type="entry name" value="PyrdxlP_synth_PdxJ"/>
</dbReference>
<dbReference type="InterPro" id="IPR036130">
    <property type="entry name" value="Pyridoxine-5'_phos_synth"/>
</dbReference>
<dbReference type="NCBIfam" id="TIGR00559">
    <property type="entry name" value="pdxJ"/>
    <property type="match status" value="1"/>
</dbReference>
<dbReference type="NCBIfam" id="NF003623">
    <property type="entry name" value="PRK05265.1-1"/>
    <property type="match status" value="1"/>
</dbReference>
<dbReference type="NCBIfam" id="NF003625">
    <property type="entry name" value="PRK05265.1-3"/>
    <property type="match status" value="1"/>
</dbReference>
<dbReference type="NCBIfam" id="NF003627">
    <property type="entry name" value="PRK05265.1-5"/>
    <property type="match status" value="1"/>
</dbReference>
<dbReference type="PANTHER" id="PTHR30456">
    <property type="entry name" value="PYRIDOXINE 5'-PHOSPHATE SYNTHASE"/>
    <property type="match status" value="1"/>
</dbReference>
<dbReference type="PANTHER" id="PTHR30456:SF0">
    <property type="entry name" value="PYRIDOXINE 5'-PHOSPHATE SYNTHASE"/>
    <property type="match status" value="1"/>
</dbReference>
<dbReference type="Pfam" id="PF03740">
    <property type="entry name" value="PdxJ"/>
    <property type="match status" value="1"/>
</dbReference>
<dbReference type="SUPFAM" id="SSF63892">
    <property type="entry name" value="Pyridoxine 5'-phosphate synthase"/>
    <property type="match status" value="1"/>
</dbReference>
<accession>Q87XG4</accession>
<evidence type="ECO:0000255" key="1">
    <source>
        <dbReference type="HAMAP-Rule" id="MF_00279"/>
    </source>
</evidence>
<protein>
    <recommendedName>
        <fullName evidence="1">Pyridoxine 5'-phosphate synthase</fullName>
        <shortName evidence="1">PNP synthase</shortName>
        <ecNumber evidence="1">2.6.99.2</ecNumber>
    </recommendedName>
</protein>
<name>PDXJ_PSESM</name>
<proteinExistence type="inferred from homology"/>
<gene>
    <name evidence="1" type="primary">pdxJ</name>
    <name type="ordered locus">PSPTO_4214</name>
</gene>
<feature type="chain" id="PRO_0000190125" description="Pyridoxine 5'-phosphate synthase">
    <location>
        <begin position="1"/>
        <end position="246"/>
    </location>
</feature>
<feature type="active site" description="Proton acceptor" evidence="1">
    <location>
        <position position="48"/>
    </location>
</feature>
<feature type="active site" description="Proton acceptor" evidence="1">
    <location>
        <position position="75"/>
    </location>
</feature>
<feature type="active site" description="Proton donor" evidence="1">
    <location>
        <position position="196"/>
    </location>
</feature>
<feature type="binding site" evidence="1">
    <location>
        <position position="12"/>
    </location>
    <ligand>
        <name>3-amino-2-oxopropyl phosphate</name>
        <dbReference type="ChEBI" id="CHEBI:57279"/>
    </ligand>
</feature>
<feature type="binding site" evidence="1">
    <location>
        <begin position="14"/>
        <end position="15"/>
    </location>
    <ligand>
        <name>1-deoxy-D-xylulose 5-phosphate</name>
        <dbReference type="ChEBI" id="CHEBI:57792"/>
    </ligand>
</feature>
<feature type="binding site" evidence="1">
    <location>
        <position position="23"/>
    </location>
    <ligand>
        <name>3-amino-2-oxopropyl phosphate</name>
        <dbReference type="ChEBI" id="CHEBI:57279"/>
    </ligand>
</feature>
<feature type="binding site" evidence="1">
    <location>
        <position position="50"/>
    </location>
    <ligand>
        <name>1-deoxy-D-xylulose 5-phosphate</name>
        <dbReference type="ChEBI" id="CHEBI:57792"/>
    </ligand>
</feature>
<feature type="binding site" evidence="1">
    <location>
        <position position="55"/>
    </location>
    <ligand>
        <name>1-deoxy-D-xylulose 5-phosphate</name>
        <dbReference type="ChEBI" id="CHEBI:57792"/>
    </ligand>
</feature>
<feature type="binding site" evidence="1">
    <location>
        <position position="105"/>
    </location>
    <ligand>
        <name>1-deoxy-D-xylulose 5-phosphate</name>
        <dbReference type="ChEBI" id="CHEBI:57792"/>
    </ligand>
</feature>
<feature type="binding site" evidence="1">
    <location>
        <position position="197"/>
    </location>
    <ligand>
        <name>3-amino-2-oxopropyl phosphate</name>
        <dbReference type="ChEBI" id="CHEBI:57279"/>
    </ligand>
</feature>
<feature type="binding site" evidence="1">
    <location>
        <begin position="218"/>
        <end position="219"/>
    </location>
    <ligand>
        <name>3-amino-2-oxopropyl phosphate</name>
        <dbReference type="ChEBI" id="CHEBI:57279"/>
    </ligand>
</feature>
<feature type="site" description="Transition state stabilizer" evidence="1">
    <location>
        <position position="156"/>
    </location>
</feature>